<proteinExistence type="evidence at protein level"/>
<feature type="chain" id="PRO_0000220994" description="Metaxin-1 homolog">
    <location>
        <begin position="1"/>
        <end position="327"/>
    </location>
</feature>
<feature type="transmembrane region" description="Helical" evidence="3">
    <location>
        <begin position="281"/>
        <end position="301"/>
    </location>
</feature>
<gene>
    <name type="ORF">CG9393</name>
</gene>
<accession>Q9VHB6</accession>
<protein>
    <recommendedName>
        <fullName>Metaxin-1 homolog</fullName>
    </recommendedName>
    <alternativeName>
        <fullName>Mitochondrial outer membrane import complex protein 1</fullName>
    </alternativeName>
</protein>
<sequence length="327" mass="37252">MEMQLGAMLYVYKGEYGLPSIDFECLRALCLLRFTRCPMDVQTSSNPLRSGAGKLPYLQIGNQKFAGYRQIKRVLDLEGYPIDAHLSTKQKHLSTAYANWVFTNLHAYYHYFLFGEPHNFDTTTRGLYAKRTPFPFNFYYPSSYQREACDVVQVMAGFDVNDKLDKHEGDYLVVNAKKVVNLLSRKLGRKVWFFGDTYSEFDAIVYSYLAIIFKIALPNNPLQNHIKGCQNLVNFINRITKDIFRIEGYSSVKLTKTPSGTEASLTASERKFLDSELNTKIVAGVGAVLAMGAFAAWRGIYNQLTTRSSTDYDGIDYEDDEMEEGLD</sequence>
<dbReference type="EMBL" id="AE014297">
    <property type="protein sequence ID" value="AAF54402.1"/>
    <property type="molecule type" value="Genomic_DNA"/>
</dbReference>
<dbReference type="EMBL" id="AY051682">
    <property type="protein sequence ID" value="AAK93106.1"/>
    <property type="molecule type" value="mRNA"/>
</dbReference>
<dbReference type="RefSeq" id="NP_649908.1">
    <property type="nucleotide sequence ID" value="NM_141651.3"/>
</dbReference>
<dbReference type="SMR" id="Q9VHB6"/>
<dbReference type="BioGRID" id="66311">
    <property type="interactions" value="8"/>
</dbReference>
<dbReference type="DIP" id="DIP-23833N"/>
<dbReference type="FunCoup" id="Q9VHB6">
    <property type="interactions" value="1539"/>
</dbReference>
<dbReference type="IntAct" id="Q9VHB6">
    <property type="interactions" value="7"/>
</dbReference>
<dbReference type="STRING" id="7227.FBpp0081591"/>
<dbReference type="PaxDb" id="7227-FBpp0081591"/>
<dbReference type="DNASU" id="41152"/>
<dbReference type="EnsemblMetazoa" id="FBtr0082113">
    <property type="protein sequence ID" value="FBpp0081591"/>
    <property type="gene ID" value="FBgn0037710"/>
</dbReference>
<dbReference type="GeneID" id="41152"/>
<dbReference type="KEGG" id="dme:Dmel_CG9393"/>
<dbReference type="UCSC" id="CG9393-RA">
    <property type="organism name" value="d. melanogaster"/>
</dbReference>
<dbReference type="AGR" id="FB:FBgn0037710"/>
<dbReference type="FlyBase" id="FBgn0037710">
    <property type="gene designation" value="CG9393"/>
</dbReference>
<dbReference type="VEuPathDB" id="VectorBase:FBgn0037710"/>
<dbReference type="eggNOG" id="KOG3028">
    <property type="taxonomic scope" value="Eukaryota"/>
</dbReference>
<dbReference type="GeneTree" id="ENSGT00950000182919"/>
<dbReference type="InParanoid" id="Q9VHB6"/>
<dbReference type="OMA" id="FPYNLYY"/>
<dbReference type="OrthoDB" id="5835136at2759"/>
<dbReference type="PhylomeDB" id="Q9VHB6"/>
<dbReference type="Reactome" id="R-DME-9013404">
    <property type="pathway name" value="RAC2 GTPase cycle"/>
</dbReference>
<dbReference type="BioGRID-ORCS" id="41152">
    <property type="hits" value="1 hit in 3 CRISPR screens"/>
</dbReference>
<dbReference type="GenomeRNAi" id="41152"/>
<dbReference type="PRO" id="PR:Q9VHB6"/>
<dbReference type="Proteomes" id="UP000000803">
    <property type="component" value="Chromosome 3R"/>
</dbReference>
<dbReference type="Bgee" id="FBgn0037710">
    <property type="expression patterns" value="Expressed in early-mid elongation-stage spermatid (Drosophila) in testis and 83 other cell types or tissues"/>
</dbReference>
<dbReference type="ExpressionAtlas" id="Q9VHB6">
    <property type="expression patterns" value="baseline and differential"/>
</dbReference>
<dbReference type="GO" id="GO:0005737">
    <property type="term" value="C:cytoplasm"/>
    <property type="evidence" value="ECO:0000318"/>
    <property type="project" value="GO_Central"/>
</dbReference>
<dbReference type="GO" id="GO:0005741">
    <property type="term" value="C:mitochondrial outer membrane"/>
    <property type="evidence" value="ECO:0000314"/>
    <property type="project" value="FlyBase"/>
</dbReference>
<dbReference type="GO" id="GO:0001401">
    <property type="term" value="C:SAM complex"/>
    <property type="evidence" value="ECO:0000250"/>
    <property type="project" value="FlyBase"/>
</dbReference>
<dbReference type="GO" id="GO:0007005">
    <property type="term" value="P:mitochondrion organization"/>
    <property type="evidence" value="ECO:0000318"/>
    <property type="project" value="GO_Central"/>
</dbReference>
<dbReference type="GO" id="GO:0045040">
    <property type="term" value="P:protein insertion into mitochondrial outer membrane"/>
    <property type="evidence" value="ECO:0000250"/>
    <property type="project" value="FlyBase"/>
</dbReference>
<dbReference type="CDD" id="cd03212">
    <property type="entry name" value="GST_C_Metaxin1_3"/>
    <property type="match status" value="1"/>
</dbReference>
<dbReference type="CDD" id="cd03078">
    <property type="entry name" value="GST_N_Metaxin1_like"/>
    <property type="match status" value="1"/>
</dbReference>
<dbReference type="InterPro" id="IPR036282">
    <property type="entry name" value="Glutathione-S-Trfase_C_sf"/>
</dbReference>
<dbReference type="InterPro" id="IPR017410">
    <property type="entry name" value="Metaxin1/3"/>
</dbReference>
<dbReference type="InterPro" id="IPR033468">
    <property type="entry name" value="Metaxin_GST"/>
</dbReference>
<dbReference type="InterPro" id="IPR050931">
    <property type="entry name" value="Mito_Protein_Transport_Metaxin"/>
</dbReference>
<dbReference type="InterPro" id="IPR019564">
    <property type="entry name" value="Sam37/metaxin_N"/>
</dbReference>
<dbReference type="PANTHER" id="PTHR12289:SF41">
    <property type="entry name" value="FAILED AXON CONNECTIONS-RELATED"/>
    <property type="match status" value="1"/>
</dbReference>
<dbReference type="PANTHER" id="PTHR12289">
    <property type="entry name" value="METAXIN RELATED"/>
    <property type="match status" value="1"/>
</dbReference>
<dbReference type="Pfam" id="PF17171">
    <property type="entry name" value="GST_C_6"/>
    <property type="match status" value="1"/>
</dbReference>
<dbReference type="Pfam" id="PF10568">
    <property type="entry name" value="Tom37"/>
    <property type="match status" value="1"/>
</dbReference>
<dbReference type="PIRSF" id="PIRSF038150">
    <property type="entry name" value="Metaxin"/>
    <property type="match status" value="1"/>
</dbReference>
<dbReference type="SUPFAM" id="SSF47616">
    <property type="entry name" value="GST C-terminal domain-like"/>
    <property type="match status" value="1"/>
</dbReference>
<keyword id="KW-0472">Membrane</keyword>
<keyword id="KW-0496">Mitochondrion</keyword>
<keyword id="KW-1000">Mitochondrion outer membrane</keyword>
<keyword id="KW-0653">Protein transport</keyword>
<keyword id="KW-1185">Reference proteome</keyword>
<keyword id="KW-0812">Transmembrane</keyword>
<keyword id="KW-1133">Transmembrane helix</keyword>
<keyword id="KW-0813">Transport</keyword>
<name>MTX1_DROME</name>
<evidence type="ECO:0000250" key="1"/>
<evidence type="ECO:0000250" key="2">
    <source>
        <dbReference type="UniProtKB" id="Q13505"/>
    </source>
</evidence>
<evidence type="ECO:0000255" key="3"/>
<evidence type="ECO:0000305" key="4"/>
<organism>
    <name type="scientific">Drosophila melanogaster</name>
    <name type="common">Fruit fly</name>
    <dbReference type="NCBI Taxonomy" id="7227"/>
    <lineage>
        <taxon>Eukaryota</taxon>
        <taxon>Metazoa</taxon>
        <taxon>Ecdysozoa</taxon>
        <taxon>Arthropoda</taxon>
        <taxon>Hexapoda</taxon>
        <taxon>Insecta</taxon>
        <taxon>Pterygota</taxon>
        <taxon>Neoptera</taxon>
        <taxon>Endopterygota</taxon>
        <taxon>Diptera</taxon>
        <taxon>Brachycera</taxon>
        <taxon>Muscomorpha</taxon>
        <taxon>Ephydroidea</taxon>
        <taxon>Drosophilidae</taxon>
        <taxon>Drosophila</taxon>
        <taxon>Sophophora</taxon>
    </lineage>
</organism>
<reference key="1">
    <citation type="journal article" date="2000" name="Science">
        <title>The genome sequence of Drosophila melanogaster.</title>
        <authorList>
            <person name="Adams M.D."/>
            <person name="Celniker S.E."/>
            <person name="Holt R.A."/>
            <person name="Evans C.A."/>
            <person name="Gocayne J.D."/>
            <person name="Amanatides P.G."/>
            <person name="Scherer S.E."/>
            <person name="Li P.W."/>
            <person name="Hoskins R.A."/>
            <person name="Galle R.F."/>
            <person name="George R.A."/>
            <person name="Lewis S.E."/>
            <person name="Richards S."/>
            <person name="Ashburner M."/>
            <person name="Henderson S.N."/>
            <person name="Sutton G.G."/>
            <person name="Wortman J.R."/>
            <person name="Yandell M.D."/>
            <person name="Zhang Q."/>
            <person name="Chen L.X."/>
            <person name="Brandon R.C."/>
            <person name="Rogers Y.-H.C."/>
            <person name="Blazej R.G."/>
            <person name="Champe M."/>
            <person name="Pfeiffer B.D."/>
            <person name="Wan K.H."/>
            <person name="Doyle C."/>
            <person name="Baxter E.G."/>
            <person name="Helt G."/>
            <person name="Nelson C.R."/>
            <person name="Miklos G.L.G."/>
            <person name="Abril J.F."/>
            <person name="Agbayani A."/>
            <person name="An H.-J."/>
            <person name="Andrews-Pfannkoch C."/>
            <person name="Baldwin D."/>
            <person name="Ballew R.M."/>
            <person name="Basu A."/>
            <person name="Baxendale J."/>
            <person name="Bayraktaroglu L."/>
            <person name="Beasley E.M."/>
            <person name="Beeson K.Y."/>
            <person name="Benos P.V."/>
            <person name="Berman B.P."/>
            <person name="Bhandari D."/>
            <person name="Bolshakov S."/>
            <person name="Borkova D."/>
            <person name="Botchan M.R."/>
            <person name="Bouck J."/>
            <person name="Brokstein P."/>
            <person name="Brottier P."/>
            <person name="Burtis K.C."/>
            <person name="Busam D.A."/>
            <person name="Butler H."/>
            <person name="Cadieu E."/>
            <person name="Center A."/>
            <person name="Chandra I."/>
            <person name="Cherry J.M."/>
            <person name="Cawley S."/>
            <person name="Dahlke C."/>
            <person name="Davenport L.B."/>
            <person name="Davies P."/>
            <person name="de Pablos B."/>
            <person name="Delcher A."/>
            <person name="Deng Z."/>
            <person name="Mays A.D."/>
            <person name="Dew I."/>
            <person name="Dietz S.M."/>
            <person name="Dodson K."/>
            <person name="Doup L.E."/>
            <person name="Downes M."/>
            <person name="Dugan-Rocha S."/>
            <person name="Dunkov B.C."/>
            <person name="Dunn P."/>
            <person name="Durbin K.J."/>
            <person name="Evangelista C.C."/>
            <person name="Ferraz C."/>
            <person name="Ferriera S."/>
            <person name="Fleischmann W."/>
            <person name="Fosler C."/>
            <person name="Gabrielian A.E."/>
            <person name="Garg N.S."/>
            <person name="Gelbart W.M."/>
            <person name="Glasser K."/>
            <person name="Glodek A."/>
            <person name="Gong F."/>
            <person name="Gorrell J.H."/>
            <person name="Gu Z."/>
            <person name="Guan P."/>
            <person name="Harris M."/>
            <person name="Harris N.L."/>
            <person name="Harvey D.A."/>
            <person name="Heiman T.J."/>
            <person name="Hernandez J.R."/>
            <person name="Houck J."/>
            <person name="Hostin D."/>
            <person name="Houston K.A."/>
            <person name="Howland T.J."/>
            <person name="Wei M.-H."/>
            <person name="Ibegwam C."/>
            <person name="Jalali M."/>
            <person name="Kalush F."/>
            <person name="Karpen G.H."/>
            <person name="Ke Z."/>
            <person name="Kennison J.A."/>
            <person name="Ketchum K.A."/>
            <person name="Kimmel B.E."/>
            <person name="Kodira C.D."/>
            <person name="Kraft C.L."/>
            <person name="Kravitz S."/>
            <person name="Kulp D."/>
            <person name="Lai Z."/>
            <person name="Lasko P."/>
            <person name="Lei Y."/>
            <person name="Levitsky A.A."/>
            <person name="Li J.H."/>
            <person name="Li Z."/>
            <person name="Liang Y."/>
            <person name="Lin X."/>
            <person name="Liu X."/>
            <person name="Mattei B."/>
            <person name="McIntosh T.C."/>
            <person name="McLeod M.P."/>
            <person name="McPherson D."/>
            <person name="Merkulov G."/>
            <person name="Milshina N.V."/>
            <person name="Mobarry C."/>
            <person name="Morris J."/>
            <person name="Moshrefi A."/>
            <person name="Mount S.M."/>
            <person name="Moy M."/>
            <person name="Murphy B."/>
            <person name="Murphy L."/>
            <person name="Muzny D.M."/>
            <person name="Nelson D.L."/>
            <person name="Nelson D.R."/>
            <person name="Nelson K.A."/>
            <person name="Nixon K."/>
            <person name="Nusskern D.R."/>
            <person name="Pacleb J.M."/>
            <person name="Palazzolo M."/>
            <person name="Pittman G.S."/>
            <person name="Pan S."/>
            <person name="Pollard J."/>
            <person name="Puri V."/>
            <person name="Reese M.G."/>
            <person name="Reinert K."/>
            <person name="Remington K."/>
            <person name="Saunders R.D.C."/>
            <person name="Scheeler F."/>
            <person name="Shen H."/>
            <person name="Shue B.C."/>
            <person name="Siden-Kiamos I."/>
            <person name="Simpson M."/>
            <person name="Skupski M.P."/>
            <person name="Smith T.J."/>
            <person name="Spier E."/>
            <person name="Spradling A.C."/>
            <person name="Stapleton M."/>
            <person name="Strong R."/>
            <person name="Sun E."/>
            <person name="Svirskas R."/>
            <person name="Tector C."/>
            <person name="Turner R."/>
            <person name="Venter E."/>
            <person name="Wang A.H."/>
            <person name="Wang X."/>
            <person name="Wang Z.-Y."/>
            <person name="Wassarman D.A."/>
            <person name="Weinstock G.M."/>
            <person name="Weissenbach J."/>
            <person name="Williams S.M."/>
            <person name="Woodage T."/>
            <person name="Worley K.C."/>
            <person name="Wu D."/>
            <person name="Yang S."/>
            <person name="Yao Q.A."/>
            <person name="Ye J."/>
            <person name="Yeh R.-F."/>
            <person name="Zaveri J.S."/>
            <person name="Zhan M."/>
            <person name="Zhang G."/>
            <person name="Zhao Q."/>
            <person name="Zheng L."/>
            <person name="Zheng X.H."/>
            <person name="Zhong F.N."/>
            <person name="Zhong W."/>
            <person name="Zhou X."/>
            <person name="Zhu S.C."/>
            <person name="Zhu X."/>
            <person name="Smith H.O."/>
            <person name="Gibbs R.A."/>
            <person name="Myers E.W."/>
            <person name="Rubin G.M."/>
            <person name="Venter J.C."/>
        </authorList>
    </citation>
    <scope>NUCLEOTIDE SEQUENCE [LARGE SCALE GENOMIC DNA]</scope>
    <source>
        <strain>Berkeley</strain>
    </source>
</reference>
<reference key="2">
    <citation type="journal article" date="2002" name="Genome Biol.">
        <title>Annotation of the Drosophila melanogaster euchromatic genome: a systematic review.</title>
        <authorList>
            <person name="Misra S."/>
            <person name="Crosby M.A."/>
            <person name="Mungall C.J."/>
            <person name="Matthews B.B."/>
            <person name="Campbell K.S."/>
            <person name="Hradecky P."/>
            <person name="Huang Y."/>
            <person name="Kaminker J.S."/>
            <person name="Millburn G.H."/>
            <person name="Prochnik S.E."/>
            <person name="Smith C.D."/>
            <person name="Tupy J.L."/>
            <person name="Whitfield E.J."/>
            <person name="Bayraktaroglu L."/>
            <person name="Berman B.P."/>
            <person name="Bettencourt B.R."/>
            <person name="Celniker S.E."/>
            <person name="de Grey A.D.N.J."/>
            <person name="Drysdale R.A."/>
            <person name="Harris N.L."/>
            <person name="Richter J."/>
            <person name="Russo S."/>
            <person name="Schroeder A.J."/>
            <person name="Shu S.Q."/>
            <person name="Stapleton M."/>
            <person name="Yamada C."/>
            <person name="Ashburner M."/>
            <person name="Gelbart W.M."/>
            <person name="Rubin G.M."/>
            <person name="Lewis S.E."/>
        </authorList>
    </citation>
    <scope>GENOME REANNOTATION</scope>
    <source>
        <strain>Berkeley</strain>
    </source>
</reference>
<reference key="3">
    <citation type="journal article" date="2002" name="Genome Biol.">
        <title>A Drosophila full-length cDNA resource.</title>
        <authorList>
            <person name="Stapleton M."/>
            <person name="Carlson J.W."/>
            <person name="Brokstein P."/>
            <person name="Yu C."/>
            <person name="Champe M."/>
            <person name="George R.A."/>
            <person name="Guarin H."/>
            <person name="Kronmiller B."/>
            <person name="Pacleb J.M."/>
            <person name="Park S."/>
            <person name="Wan K.H."/>
            <person name="Rubin G.M."/>
            <person name="Celniker S.E."/>
        </authorList>
    </citation>
    <scope>NUCLEOTIDE SEQUENCE [LARGE SCALE MRNA]</scope>
    <source>
        <strain>Berkeley</strain>
        <tissue>Embryo</tissue>
    </source>
</reference>
<comment type="function">
    <text evidence="1">Involved in transport of proteins into the mitochondrion. Essential for embryonic development (By similarity).</text>
</comment>
<comment type="subunit">
    <text evidence="2">Associates with the mitochondrial contact site and cristae organizing system (MICOS) complex (also known as MINOS or MitOS complex).</text>
</comment>
<comment type="interaction">
    <interactant intactId="EBI-158722">
        <id>Q9VHB6</id>
    </interactant>
    <interactant intactId="EBI-133471">
        <id>Q8T4F2</id>
        <label>Dmel\CG5662</label>
    </interactant>
    <organismsDiffer>false</organismsDiffer>
    <experiments>4</experiments>
</comment>
<comment type="interaction">
    <interactant intactId="EBI-158722">
        <id>Q9VHB6</id>
    </interactant>
    <interactant intactId="EBI-124763">
        <id>Q9VW58</id>
        <label>Dmel\CG8004</label>
    </interactant>
    <organismsDiffer>false</organismsDiffer>
    <experiments>4</experiments>
</comment>
<comment type="subcellular location">
    <subcellularLocation>
        <location evidence="1">Mitochondrion outer membrane</location>
    </subcellularLocation>
</comment>
<comment type="similarity">
    <text evidence="4">Belongs to the metaxin family.</text>
</comment>